<feature type="chain" id="PRO_0000417056" description="Cytosolic sulfotransferase 8">
    <location>
        <begin position="1"/>
        <end position="331"/>
    </location>
</feature>
<feature type="region of interest" description="Disordered" evidence="2">
    <location>
        <begin position="1"/>
        <end position="31"/>
    </location>
</feature>
<feature type="compositionally biased region" description="Basic and acidic residues" evidence="2">
    <location>
        <begin position="1"/>
        <end position="11"/>
    </location>
</feature>
<feature type="compositionally biased region" description="Acidic residues" evidence="2">
    <location>
        <begin position="12"/>
        <end position="22"/>
    </location>
</feature>
<feature type="active site" description="Proton acceptor" evidence="1">
    <location>
        <position position="145"/>
    </location>
</feature>
<feature type="binding site" evidence="1">
    <location>
        <begin position="80"/>
        <end position="85"/>
    </location>
    <ligand>
        <name>3'-phosphoadenylyl sulfate</name>
        <dbReference type="ChEBI" id="CHEBI:58339"/>
    </ligand>
</feature>
<feature type="binding site" evidence="1">
    <location>
        <position position="167"/>
    </location>
    <ligand>
        <name>3'-phosphoadenylyl sulfate</name>
        <dbReference type="ChEBI" id="CHEBI:58339"/>
    </ligand>
</feature>
<feature type="binding site" evidence="1">
    <location>
        <position position="175"/>
    </location>
    <ligand>
        <name>3'-phosphoadenylyl sulfate</name>
        <dbReference type="ChEBI" id="CHEBI:58339"/>
    </ligand>
</feature>
<feature type="binding site" evidence="1">
    <location>
        <position position="231"/>
    </location>
    <ligand>
        <name>3'-phosphoadenylyl sulfate</name>
        <dbReference type="ChEBI" id="CHEBI:58339"/>
    </ligand>
</feature>
<feature type="binding site" evidence="1">
    <location>
        <begin position="297"/>
        <end position="299"/>
    </location>
    <ligand>
        <name>3'-phosphoadenylyl sulfate</name>
        <dbReference type="ChEBI" id="CHEBI:58339"/>
    </ligand>
</feature>
<organism>
    <name type="scientific">Arabidopsis thaliana</name>
    <name type="common">Mouse-ear cress</name>
    <dbReference type="NCBI Taxonomy" id="3702"/>
    <lineage>
        <taxon>Eukaryota</taxon>
        <taxon>Viridiplantae</taxon>
        <taxon>Streptophyta</taxon>
        <taxon>Embryophyta</taxon>
        <taxon>Tracheophyta</taxon>
        <taxon>Spermatophyta</taxon>
        <taxon>Magnoliopsida</taxon>
        <taxon>eudicotyledons</taxon>
        <taxon>Gunneridae</taxon>
        <taxon>Pentapetalae</taxon>
        <taxon>rosids</taxon>
        <taxon>malvids</taxon>
        <taxon>Brassicales</taxon>
        <taxon>Brassicaceae</taxon>
        <taxon>Camelineae</taxon>
        <taxon>Arabidopsis</taxon>
    </lineage>
</organism>
<accession>Q9FX56</accession>
<sequence length="331" mass="37709">MGEKDIPRNLKEEEEEEEENQSEETKSLISSLPSDIDCSGTKLYKYQGCWYDKDILQAILNFNKNFQPQETDIIVASFPKSGTTWLKALTFALAQRSKHTSDNHPLLTHNPHELVPYLELDLYLKSSKPDLTKLPSSSPRLFSTHMSFDALKVPLKESPCKIVYVCRNVKDVLVSLWCFENSMSGENNLSLEALFESLCSGVNLCGPLWENVLGYWRGSLEDPKHVLFLRYEELKTEPRVQIKRLAEFLDCPFTKEEEDSGGVDKILELCSLRNLSGLEINKTGSLSEGVSFKSFFRKGEVGDWKSYMTPEMENKIDMIVEEKLQGSGLKL</sequence>
<keyword id="KW-0963">Cytoplasm</keyword>
<keyword id="KW-1185">Reference proteome</keyword>
<keyword id="KW-0808">Transferase</keyword>
<protein>
    <recommendedName>
        <fullName>Cytosolic sulfotransferase 8</fullName>
        <shortName>AtSOT8</shortName>
        <ecNumber>2.8.2.-</ecNumber>
    </recommendedName>
    <alternativeName>
        <fullName>Sulfotransferase 4b</fullName>
        <shortName>AtST4b</shortName>
    </alternativeName>
</protein>
<name>SOT8_ARATH</name>
<proteinExistence type="evidence at transcript level"/>
<reference key="1">
    <citation type="journal article" date="2000" name="Nature">
        <title>Sequence and analysis of chromosome 1 of the plant Arabidopsis thaliana.</title>
        <authorList>
            <person name="Theologis A."/>
            <person name="Ecker J.R."/>
            <person name="Palm C.J."/>
            <person name="Federspiel N.A."/>
            <person name="Kaul S."/>
            <person name="White O."/>
            <person name="Alonso J."/>
            <person name="Altafi H."/>
            <person name="Araujo R."/>
            <person name="Bowman C.L."/>
            <person name="Brooks S.Y."/>
            <person name="Buehler E."/>
            <person name="Chan A."/>
            <person name="Chao Q."/>
            <person name="Chen H."/>
            <person name="Cheuk R.F."/>
            <person name="Chin C.W."/>
            <person name="Chung M.K."/>
            <person name="Conn L."/>
            <person name="Conway A.B."/>
            <person name="Conway A.R."/>
            <person name="Creasy T.H."/>
            <person name="Dewar K."/>
            <person name="Dunn P."/>
            <person name="Etgu P."/>
            <person name="Feldblyum T.V."/>
            <person name="Feng J.-D."/>
            <person name="Fong B."/>
            <person name="Fujii C.Y."/>
            <person name="Gill J.E."/>
            <person name="Goldsmith A.D."/>
            <person name="Haas B."/>
            <person name="Hansen N.F."/>
            <person name="Hughes B."/>
            <person name="Huizar L."/>
            <person name="Hunter J.L."/>
            <person name="Jenkins J."/>
            <person name="Johnson-Hopson C."/>
            <person name="Khan S."/>
            <person name="Khaykin E."/>
            <person name="Kim C.J."/>
            <person name="Koo H.L."/>
            <person name="Kremenetskaia I."/>
            <person name="Kurtz D.B."/>
            <person name="Kwan A."/>
            <person name="Lam B."/>
            <person name="Langin-Hooper S."/>
            <person name="Lee A."/>
            <person name="Lee J.M."/>
            <person name="Lenz C.A."/>
            <person name="Li J.H."/>
            <person name="Li Y.-P."/>
            <person name="Lin X."/>
            <person name="Liu S.X."/>
            <person name="Liu Z.A."/>
            <person name="Luros J.S."/>
            <person name="Maiti R."/>
            <person name="Marziali A."/>
            <person name="Militscher J."/>
            <person name="Miranda M."/>
            <person name="Nguyen M."/>
            <person name="Nierman W.C."/>
            <person name="Osborne B.I."/>
            <person name="Pai G."/>
            <person name="Peterson J."/>
            <person name="Pham P.K."/>
            <person name="Rizzo M."/>
            <person name="Rooney T."/>
            <person name="Rowley D."/>
            <person name="Sakano H."/>
            <person name="Salzberg S.L."/>
            <person name="Schwartz J.R."/>
            <person name="Shinn P."/>
            <person name="Southwick A.M."/>
            <person name="Sun H."/>
            <person name="Tallon L.J."/>
            <person name="Tambunga G."/>
            <person name="Toriumi M.J."/>
            <person name="Town C.D."/>
            <person name="Utterback T."/>
            <person name="Van Aken S."/>
            <person name="Vaysberg M."/>
            <person name="Vysotskaia V.S."/>
            <person name="Walker M."/>
            <person name="Wu D."/>
            <person name="Yu G."/>
            <person name="Fraser C.M."/>
            <person name="Venter J.C."/>
            <person name="Davis R.W."/>
        </authorList>
    </citation>
    <scope>NUCLEOTIDE SEQUENCE [LARGE SCALE GENOMIC DNA]</scope>
    <source>
        <strain>cv. Columbia</strain>
    </source>
</reference>
<reference key="2">
    <citation type="journal article" date="2017" name="Plant J.">
        <title>Araport11: a complete reannotation of the Arabidopsis thaliana reference genome.</title>
        <authorList>
            <person name="Cheng C.Y."/>
            <person name="Krishnakumar V."/>
            <person name="Chan A.P."/>
            <person name="Thibaud-Nissen F."/>
            <person name="Schobel S."/>
            <person name="Town C.D."/>
        </authorList>
    </citation>
    <scope>GENOME REANNOTATION</scope>
    <source>
        <strain>cv. Columbia</strain>
    </source>
</reference>
<reference key="3">
    <citation type="submission" date="2007-02" db="EMBL/GenBank/DDBJ databases">
        <title>Arabidopsis ORF clones.</title>
        <authorList>
            <person name="Bautista V.R."/>
            <person name="Kim C.J."/>
            <person name="Chen H."/>
            <person name="Wu S.Y."/>
            <person name="De Los Reyes C."/>
            <person name="Ecker J.R."/>
        </authorList>
    </citation>
    <scope>NUCLEOTIDE SEQUENCE [LARGE SCALE MRNA]</scope>
</reference>
<reference key="4">
    <citation type="journal article" date="2004" name="J. Exp. Bot.">
        <title>The multi-protein family of Arabidopsis sulphotransferases and their relatives in other plant species.</title>
        <authorList>
            <person name="Klein M."/>
            <person name="Papenbrock J."/>
        </authorList>
    </citation>
    <scope>GENE FAMILY</scope>
    <scope>NOMENCLATURE</scope>
</reference>
<reference key="5">
    <citation type="journal article" date="2007" name="Planta">
        <title>Molecular and biochemical characterization of two brassinosteroid sulfotransferases from Arabidopsis, AtST4a (At2g14920) and AtST1 (At2g03760).</title>
        <authorList>
            <person name="Marsolais F."/>
            <person name="Boyd J."/>
            <person name="Paredes Y."/>
            <person name="Schinas A.M."/>
            <person name="Garcia M."/>
            <person name="Elzein S."/>
            <person name="Varin L."/>
        </authorList>
    </citation>
    <scope>FUNCTION</scope>
    <scope>INDUCTION BY TRANS-ZEATIN</scope>
    <scope>TISSUE SPECIFICITY</scope>
    <source>
        <strain>cv. Columbia</strain>
    </source>
</reference>
<evidence type="ECO:0000250" key="1"/>
<evidence type="ECO:0000256" key="2">
    <source>
        <dbReference type="SAM" id="MobiDB-lite"/>
    </source>
</evidence>
<evidence type="ECO:0000269" key="3">
    <source>
    </source>
</evidence>
<evidence type="ECO:0000305" key="4"/>
<dbReference type="EC" id="2.8.2.-"/>
<dbReference type="EMBL" id="AC011810">
    <property type="protein sequence ID" value="AAG09547.1"/>
    <property type="molecule type" value="Genomic_DNA"/>
</dbReference>
<dbReference type="EMBL" id="CP002684">
    <property type="protein sequence ID" value="AEE29014.1"/>
    <property type="molecule type" value="Genomic_DNA"/>
</dbReference>
<dbReference type="EMBL" id="BT030329">
    <property type="protein sequence ID" value="ABO09892.1"/>
    <property type="molecule type" value="mRNA"/>
</dbReference>
<dbReference type="RefSeq" id="NP_172799.1">
    <property type="nucleotide sequence ID" value="NM_101212.3"/>
</dbReference>
<dbReference type="SMR" id="Q9FX56"/>
<dbReference type="FunCoup" id="Q9FX56">
    <property type="interactions" value="123"/>
</dbReference>
<dbReference type="STRING" id="3702.Q9FX56"/>
<dbReference type="iPTMnet" id="Q9FX56"/>
<dbReference type="PaxDb" id="3702-AT1G13420.1"/>
<dbReference type="ProteomicsDB" id="245329"/>
<dbReference type="EnsemblPlants" id="AT1G13420.1">
    <property type="protein sequence ID" value="AT1G13420.1"/>
    <property type="gene ID" value="AT1G13420"/>
</dbReference>
<dbReference type="GeneID" id="837902"/>
<dbReference type="Gramene" id="AT1G13420.1">
    <property type="protein sequence ID" value="AT1G13420.1"/>
    <property type="gene ID" value="AT1G13420"/>
</dbReference>
<dbReference type="KEGG" id="ath:AT1G13420"/>
<dbReference type="Araport" id="AT1G13420"/>
<dbReference type="TAIR" id="AT1G13420">
    <property type="gene designation" value="ST4B"/>
</dbReference>
<dbReference type="eggNOG" id="KOG1584">
    <property type="taxonomic scope" value="Eukaryota"/>
</dbReference>
<dbReference type="HOGENOM" id="CLU_027239_0_3_1"/>
<dbReference type="InParanoid" id="Q9FX56"/>
<dbReference type="OMA" id="DHALSWN"/>
<dbReference type="PhylomeDB" id="Q9FX56"/>
<dbReference type="BioCyc" id="ARA:AT1G13420-MONOMER"/>
<dbReference type="PRO" id="PR:Q9FX56"/>
<dbReference type="Proteomes" id="UP000006548">
    <property type="component" value="Chromosome 1"/>
</dbReference>
<dbReference type="ExpressionAtlas" id="Q9FX56">
    <property type="expression patterns" value="baseline and differential"/>
</dbReference>
<dbReference type="GO" id="GO:0005737">
    <property type="term" value="C:cytoplasm"/>
    <property type="evidence" value="ECO:0007669"/>
    <property type="project" value="UniProtKB-SubCell"/>
</dbReference>
<dbReference type="GO" id="GO:0008146">
    <property type="term" value="F:sulfotransferase activity"/>
    <property type="evidence" value="ECO:0007669"/>
    <property type="project" value="InterPro"/>
</dbReference>
<dbReference type="GO" id="GO:0009735">
    <property type="term" value="P:response to cytokinin"/>
    <property type="evidence" value="ECO:0000270"/>
    <property type="project" value="TAIR"/>
</dbReference>
<dbReference type="FunFam" id="3.40.50.300:FF:001258">
    <property type="entry name" value="Sulfotransferase"/>
    <property type="match status" value="1"/>
</dbReference>
<dbReference type="Gene3D" id="3.40.50.300">
    <property type="entry name" value="P-loop containing nucleotide triphosphate hydrolases"/>
    <property type="match status" value="1"/>
</dbReference>
<dbReference type="InterPro" id="IPR027417">
    <property type="entry name" value="P-loop_NTPase"/>
</dbReference>
<dbReference type="InterPro" id="IPR000863">
    <property type="entry name" value="Sulfotransferase_dom"/>
</dbReference>
<dbReference type="PANTHER" id="PTHR11783">
    <property type="entry name" value="SULFOTRANSFERASE SULT"/>
    <property type="match status" value="1"/>
</dbReference>
<dbReference type="Pfam" id="PF00685">
    <property type="entry name" value="Sulfotransfer_1"/>
    <property type="match status" value="1"/>
</dbReference>
<dbReference type="SUPFAM" id="SSF52540">
    <property type="entry name" value="P-loop containing nucleoside triphosphate hydrolases"/>
    <property type="match status" value="1"/>
</dbReference>
<gene>
    <name type="primary">SOT8</name>
    <name type="synonym">ST4B</name>
    <name type="ordered locus">At1g13420</name>
    <name type="ORF">T6J4.16</name>
</gene>
<comment type="function">
    <text evidence="3">Sulfotransferase that utilizes 3'-phospho-5'-adenylyl sulfate (PAPS) as sulfonate donor. No activity with brassinosteroids.</text>
</comment>
<comment type="subcellular location">
    <subcellularLocation>
        <location evidence="1">Cytoplasm</location>
    </subcellularLocation>
</comment>
<comment type="tissue specificity">
    <text evidence="3">Expressed in seedlings and roots.</text>
</comment>
<comment type="induction">
    <text evidence="3">Up-regulated by trans-zeatin.</text>
</comment>
<comment type="similarity">
    <text evidence="4">Belongs to the sulfotransferase 1 family.</text>
</comment>